<sequence length="101" mass="11219">MIPGQYQIQPGEIELNAGRRTLRLNVSNSGDRPIQVGSHYHFFETNDALTFDRAASRGMRLNIAAGTAVRFEPGQTREVELVELAGKRRVFGFAGRIMGDL</sequence>
<dbReference type="EC" id="3.5.1.5" evidence="1"/>
<dbReference type="EMBL" id="CP000076">
    <property type="protein sequence ID" value="AAY96039.1"/>
    <property type="molecule type" value="Genomic_DNA"/>
</dbReference>
<dbReference type="RefSeq" id="WP_011059000.1">
    <property type="nucleotide sequence ID" value="NC_004129.6"/>
</dbReference>
<dbReference type="SMR" id="Q4KJ09"/>
<dbReference type="STRING" id="220664.PFL_0632"/>
<dbReference type="KEGG" id="pfl:PFL_0632"/>
<dbReference type="PATRIC" id="fig|220664.5.peg.648"/>
<dbReference type="eggNOG" id="COG0832">
    <property type="taxonomic scope" value="Bacteria"/>
</dbReference>
<dbReference type="HOGENOM" id="CLU_129707_1_1_6"/>
<dbReference type="UniPathway" id="UPA00258">
    <property type="reaction ID" value="UER00370"/>
</dbReference>
<dbReference type="Proteomes" id="UP000008540">
    <property type="component" value="Chromosome"/>
</dbReference>
<dbReference type="GO" id="GO:0035550">
    <property type="term" value="C:urease complex"/>
    <property type="evidence" value="ECO:0007669"/>
    <property type="project" value="InterPro"/>
</dbReference>
<dbReference type="GO" id="GO:0009039">
    <property type="term" value="F:urease activity"/>
    <property type="evidence" value="ECO:0007669"/>
    <property type="project" value="UniProtKB-UniRule"/>
</dbReference>
<dbReference type="GO" id="GO:0043419">
    <property type="term" value="P:urea catabolic process"/>
    <property type="evidence" value="ECO:0007669"/>
    <property type="project" value="UniProtKB-UniRule"/>
</dbReference>
<dbReference type="CDD" id="cd00407">
    <property type="entry name" value="Urease_beta"/>
    <property type="match status" value="1"/>
</dbReference>
<dbReference type="FunFam" id="2.10.150.10:FF:000001">
    <property type="entry name" value="Urease subunit beta"/>
    <property type="match status" value="1"/>
</dbReference>
<dbReference type="Gene3D" id="2.10.150.10">
    <property type="entry name" value="Urease, beta subunit"/>
    <property type="match status" value="1"/>
</dbReference>
<dbReference type="HAMAP" id="MF_01954">
    <property type="entry name" value="Urease_beta"/>
    <property type="match status" value="1"/>
</dbReference>
<dbReference type="InterPro" id="IPR002019">
    <property type="entry name" value="Urease_beta-like"/>
</dbReference>
<dbReference type="InterPro" id="IPR036461">
    <property type="entry name" value="Urease_betasu_sf"/>
</dbReference>
<dbReference type="InterPro" id="IPR050069">
    <property type="entry name" value="Urease_subunit"/>
</dbReference>
<dbReference type="NCBIfam" id="NF009682">
    <property type="entry name" value="PRK13203.1"/>
    <property type="match status" value="1"/>
</dbReference>
<dbReference type="NCBIfam" id="TIGR00192">
    <property type="entry name" value="urease_beta"/>
    <property type="match status" value="1"/>
</dbReference>
<dbReference type="PANTHER" id="PTHR33569">
    <property type="entry name" value="UREASE"/>
    <property type="match status" value="1"/>
</dbReference>
<dbReference type="PANTHER" id="PTHR33569:SF1">
    <property type="entry name" value="UREASE"/>
    <property type="match status" value="1"/>
</dbReference>
<dbReference type="Pfam" id="PF00699">
    <property type="entry name" value="Urease_beta"/>
    <property type="match status" value="1"/>
</dbReference>
<dbReference type="SUPFAM" id="SSF51278">
    <property type="entry name" value="Urease, beta-subunit"/>
    <property type="match status" value="1"/>
</dbReference>
<proteinExistence type="inferred from homology"/>
<feature type="chain" id="PRO_0000234261" description="Urease subunit beta">
    <location>
        <begin position="1"/>
        <end position="101"/>
    </location>
</feature>
<comment type="catalytic activity">
    <reaction evidence="1">
        <text>urea + 2 H2O + H(+) = hydrogencarbonate + 2 NH4(+)</text>
        <dbReference type="Rhea" id="RHEA:20557"/>
        <dbReference type="ChEBI" id="CHEBI:15377"/>
        <dbReference type="ChEBI" id="CHEBI:15378"/>
        <dbReference type="ChEBI" id="CHEBI:16199"/>
        <dbReference type="ChEBI" id="CHEBI:17544"/>
        <dbReference type="ChEBI" id="CHEBI:28938"/>
        <dbReference type="EC" id="3.5.1.5"/>
    </reaction>
</comment>
<comment type="pathway">
    <text evidence="1">Nitrogen metabolism; urea degradation; CO(2) and NH(3) from urea (urease route): step 1/1.</text>
</comment>
<comment type="subunit">
    <text evidence="1">Heterotrimer of UreA (gamma), UreB (beta) and UreC (alpha) subunits. Three heterotrimers associate to form the active enzyme.</text>
</comment>
<comment type="subcellular location">
    <subcellularLocation>
        <location evidence="1">Cytoplasm</location>
    </subcellularLocation>
</comment>
<comment type="similarity">
    <text evidence="1">Belongs to the urease beta subunit family.</text>
</comment>
<reference key="1">
    <citation type="journal article" date="2005" name="Nat. Biotechnol.">
        <title>Complete genome sequence of the plant commensal Pseudomonas fluorescens Pf-5.</title>
        <authorList>
            <person name="Paulsen I.T."/>
            <person name="Press C.M."/>
            <person name="Ravel J."/>
            <person name="Kobayashi D.Y."/>
            <person name="Myers G.S.A."/>
            <person name="Mavrodi D.V."/>
            <person name="DeBoy R.T."/>
            <person name="Seshadri R."/>
            <person name="Ren Q."/>
            <person name="Madupu R."/>
            <person name="Dodson R.J."/>
            <person name="Durkin A.S."/>
            <person name="Brinkac L.M."/>
            <person name="Daugherty S.C."/>
            <person name="Sullivan S.A."/>
            <person name="Rosovitz M.J."/>
            <person name="Gwinn M.L."/>
            <person name="Zhou L."/>
            <person name="Schneider D.J."/>
            <person name="Cartinhour S.W."/>
            <person name="Nelson W.C."/>
            <person name="Weidman J."/>
            <person name="Watkins K."/>
            <person name="Tran K."/>
            <person name="Khouri H."/>
            <person name="Pierson E.A."/>
            <person name="Pierson L.S. III"/>
            <person name="Thomashow L.S."/>
            <person name="Loper J.E."/>
        </authorList>
    </citation>
    <scope>NUCLEOTIDE SEQUENCE [LARGE SCALE GENOMIC DNA]</scope>
    <source>
        <strain>ATCC BAA-477 / NRRL B-23932 / Pf-5</strain>
    </source>
</reference>
<gene>
    <name evidence="1" type="primary">ureB</name>
    <name type="ordered locus">PFL_0632</name>
</gene>
<keyword id="KW-0963">Cytoplasm</keyword>
<keyword id="KW-0378">Hydrolase</keyword>
<evidence type="ECO:0000255" key="1">
    <source>
        <dbReference type="HAMAP-Rule" id="MF_01954"/>
    </source>
</evidence>
<name>URE2_PSEF5</name>
<organism>
    <name type="scientific">Pseudomonas fluorescens (strain ATCC BAA-477 / NRRL B-23932 / Pf-5)</name>
    <dbReference type="NCBI Taxonomy" id="220664"/>
    <lineage>
        <taxon>Bacteria</taxon>
        <taxon>Pseudomonadati</taxon>
        <taxon>Pseudomonadota</taxon>
        <taxon>Gammaproteobacteria</taxon>
        <taxon>Pseudomonadales</taxon>
        <taxon>Pseudomonadaceae</taxon>
        <taxon>Pseudomonas</taxon>
    </lineage>
</organism>
<protein>
    <recommendedName>
        <fullName evidence="1">Urease subunit beta</fullName>
        <ecNumber evidence="1">3.5.1.5</ecNumber>
    </recommendedName>
    <alternativeName>
        <fullName evidence="1">Urea amidohydrolase subunit beta</fullName>
    </alternativeName>
</protein>
<accession>Q4KJ09</accession>